<dbReference type="EC" id="5.4.99.18" evidence="1"/>
<dbReference type="EMBL" id="BA000031">
    <property type="protein sequence ID" value="BAC61299.1"/>
    <property type="molecule type" value="Genomic_DNA"/>
</dbReference>
<dbReference type="RefSeq" id="NP_799415.1">
    <property type="nucleotide sequence ID" value="NC_004603.1"/>
</dbReference>
<dbReference type="RefSeq" id="WP_005394016.1">
    <property type="nucleotide sequence ID" value="NC_004603.1"/>
</dbReference>
<dbReference type="SMR" id="Q87KE1"/>
<dbReference type="GeneID" id="70913849"/>
<dbReference type="KEGG" id="vpa:VP3036"/>
<dbReference type="PATRIC" id="fig|223926.6.peg.2920"/>
<dbReference type="eggNOG" id="COG0041">
    <property type="taxonomic scope" value="Bacteria"/>
</dbReference>
<dbReference type="HOGENOM" id="CLU_094982_2_2_6"/>
<dbReference type="UniPathway" id="UPA00074">
    <property type="reaction ID" value="UER00943"/>
</dbReference>
<dbReference type="Proteomes" id="UP000002493">
    <property type="component" value="Chromosome 1"/>
</dbReference>
<dbReference type="GO" id="GO:0034023">
    <property type="term" value="F:5-(carboxyamino)imidazole ribonucleotide mutase activity"/>
    <property type="evidence" value="ECO:0007669"/>
    <property type="project" value="UniProtKB-UniRule"/>
</dbReference>
<dbReference type="GO" id="GO:0006189">
    <property type="term" value="P:'de novo' IMP biosynthetic process"/>
    <property type="evidence" value="ECO:0007669"/>
    <property type="project" value="UniProtKB-UniRule"/>
</dbReference>
<dbReference type="Gene3D" id="3.40.50.1970">
    <property type="match status" value="1"/>
</dbReference>
<dbReference type="HAMAP" id="MF_01929">
    <property type="entry name" value="PurE_classI"/>
    <property type="match status" value="1"/>
</dbReference>
<dbReference type="InterPro" id="IPR033747">
    <property type="entry name" value="PurE_ClassI"/>
</dbReference>
<dbReference type="InterPro" id="IPR000031">
    <property type="entry name" value="PurE_dom"/>
</dbReference>
<dbReference type="InterPro" id="IPR024694">
    <property type="entry name" value="PurE_prokaryotes"/>
</dbReference>
<dbReference type="NCBIfam" id="TIGR01162">
    <property type="entry name" value="purE"/>
    <property type="match status" value="1"/>
</dbReference>
<dbReference type="PANTHER" id="PTHR23046:SF2">
    <property type="entry name" value="PHOSPHORIBOSYLAMINOIMIDAZOLE CARBOXYLASE"/>
    <property type="match status" value="1"/>
</dbReference>
<dbReference type="PANTHER" id="PTHR23046">
    <property type="entry name" value="PHOSPHORIBOSYLAMINOIMIDAZOLE CARBOXYLASE CATALYTIC SUBUNIT"/>
    <property type="match status" value="1"/>
</dbReference>
<dbReference type="Pfam" id="PF00731">
    <property type="entry name" value="AIRC"/>
    <property type="match status" value="1"/>
</dbReference>
<dbReference type="PIRSF" id="PIRSF001338">
    <property type="entry name" value="AIR_carboxylase"/>
    <property type="match status" value="1"/>
</dbReference>
<dbReference type="SMART" id="SM01001">
    <property type="entry name" value="AIRC"/>
    <property type="match status" value="1"/>
</dbReference>
<dbReference type="SUPFAM" id="SSF52255">
    <property type="entry name" value="N5-CAIR mutase (phosphoribosylaminoimidazole carboxylase, PurE)"/>
    <property type="match status" value="1"/>
</dbReference>
<feature type="chain" id="PRO_0000074983" description="N5-carboxyaminoimidazole ribonucleotide mutase">
    <location>
        <begin position="1"/>
        <end position="161"/>
    </location>
</feature>
<feature type="binding site" evidence="1">
    <location>
        <position position="9"/>
    </location>
    <ligand>
        <name>substrate</name>
    </ligand>
</feature>
<feature type="binding site" evidence="1">
    <location>
        <position position="12"/>
    </location>
    <ligand>
        <name>substrate</name>
    </ligand>
</feature>
<feature type="binding site" evidence="1">
    <location>
        <position position="39"/>
    </location>
    <ligand>
        <name>substrate</name>
    </ligand>
</feature>
<evidence type="ECO:0000255" key="1">
    <source>
        <dbReference type="HAMAP-Rule" id="MF_01929"/>
    </source>
</evidence>
<gene>
    <name evidence="1" type="primary">purE</name>
    <name type="ordered locus">VP3036</name>
</gene>
<sequence length="161" mass="16598">MKVGIIMGSKSDWPTMKLAADMLDQFGVSYETKVVSAHRTPQLLADYASSAKERGIKVIIAGAGGAAHLPGMAAAFTSLPVLGVPVQSRALKGMDSLLSIVQMPKGIAVGTLAIGEAGAANAGILAAQILGTHDESIMAKVEAFRNEQTETVLANPNPAED</sequence>
<accession>Q87KE1</accession>
<name>PURE_VIBPA</name>
<protein>
    <recommendedName>
        <fullName evidence="1">N5-carboxyaminoimidazole ribonucleotide mutase</fullName>
        <shortName evidence="1">N5-CAIR mutase</shortName>
        <ecNumber evidence="1">5.4.99.18</ecNumber>
    </recommendedName>
    <alternativeName>
        <fullName evidence="1">5-(carboxyamino)imidazole ribonucleotide mutase</fullName>
    </alternativeName>
</protein>
<reference key="1">
    <citation type="journal article" date="2003" name="Lancet">
        <title>Genome sequence of Vibrio parahaemolyticus: a pathogenic mechanism distinct from that of V. cholerae.</title>
        <authorList>
            <person name="Makino K."/>
            <person name="Oshima K."/>
            <person name="Kurokawa K."/>
            <person name="Yokoyama K."/>
            <person name="Uda T."/>
            <person name="Tagomori K."/>
            <person name="Iijima Y."/>
            <person name="Najima M."/>
            <person name="Nakano M."/>
            <person name="Yamashita A."/>
            <person name="Kubota Y."/>
            <person name="Kimura S."/>
            <person name="Yasunaga T."/>
            <person name="Honda T."/>
            <person name="Shinagawa H."/>
            <person name="Hattori M."/>
            <person name="Iida T."/>
        </authorList>
    </citation>
    <scope>NUCLEOTIDE SEQUENCE [LARGE SCALE GENOMIC DNA]</scope>
    <source>
        <strain>RIMD 2210633</strain>
    </source>
</reference>
<organism>
    <name type="scientific">Vibrio parahaemolyticus serotype O3:K6 (strain RIMD 2210633)</name>
    <dbReference type="NCBI Taxonomy" id="223926"/>
    <lineage>
        <taxon>Bacteria</taxon>
        <taxon>Pseudomonadati</taxon>
        <taxon>Pseudomonadota</taxon>
        <taxon>Gammaproteobacteria</taxon>
        <taxon>Vibrionales</taxon>
        <taxon>Vibrionaceae</taxon>
        <taxon>Vibrio</taxon>
    </lineage>
</organism>
<comment type="function">
    <text evidence="1">Catalyzes the conversion of N5-carboxyaminoimidazole ribonucleotide (N5-CAIR) to 4-carboxy-5-aminoimidazole ribonucleotide (CAIR).</text>
</comment>
<comment type="catalytic activity">
    <reaction evidence="1">
        <text>5-carboxyamino-1-(5-phospho-D-ribosyl)imidazole + H(+) = 5-amino-1-(5-phospho-D-ribosyl)imidazole-4-carboxylate</text>
        <dbReference type="Rhea" id="RHEA:13193"/>
        <dbReference type="ChEBI" id="CHEBI:15378"/>
        <dbReference type="ChEBI" id="CHEBI:58730"/>
        <dbReference type="ChEBI" id="CHEBI:77657"/>
        <dbReference type="EC" id="5.4.99.18"/>
    </reaction>
</comment>
<comment type="pathway">
    <text evidence="1">Purine metabolism; IMP biosynthesis via de novo pathway; 5-amino-1-(5-phospho-D-ribosyl)imidazole-4-carboxylate from 5-amino-1-(5-phospho-D-ribosyl)imidazole (N5-CAIR route): step 2/2.</text>
</comment>
<comment type="similarity">
    <text evidence="1">Belongs to the AIR carboxylase family. Class I subfamily.</text>
</comment>
<proteinExistence type="inferred from homology"/>
<keyword id="KW-0413">Isomerase</keyword>
<keyword id="KW-0658">Purine biosynthesis</keyword>